<comment type="function">
    <molecule>Gasdermin-D</molecule>
    <text evidence="3 4 5 7 8 9">Precursor of a pore-forming protein that plays a key role in host defense against pathogen infection and danger signals (PubMed:26375003, PubMed:26375259, PubMed:26611636, PubMed:27383986, PubMed:27385778, PubMed:27418190). This form constitutes the precursor of the pore-forming protein: upon cleavage, the released N-terminal moiety (Gasdermin-D, N-terminal) binds to membranes and forms pores, triggering pyroptosis (PubMed:26375003, PubMed:26375259, PubMed:26611636, PubMed:27383986, PubMed:27385778, PubMed:27418190).</text>
</comment>
<comment type="function">
    <molecule>Gasdermin-D, N-terminal</molecule>
    <text evidence="1 3 4 5 6 7 8 9 10 11 14 15 19 20 21 22 27 29 31 32 34">Promotes pyroptosis in response to microbial infection and danger signals (PubMed:26375003, PubMed:26375259, PubMed:26611636, PubMed:27383986, PubMed:27385778, PubMed:27418190, PubMed:32820063, PubMed:34289345, PubMed:35705808, PubMed:37988464, PubMed:38530158, PubMed:38538834, PubMed:38632402). Produced by the cleavage of gasdermin-D by inflammatory caspases CASP1 or CASP4/CASP11 in response to canonical, as well as non-canonical (such as cytosolic LPS) inflammasome activators (PubMed:26375003, PubMed:26375259, PubMed:26611636, PubMed:27383986, PubMed:27385778, PubMed:27418190, PubMed:35705808, PubMed:38632402). After cleavage, moves to the plasma membrane where it strongly binds to inner leaflet lipids, including monophosphorylated phosphatidylinositols, such as phosphatidylinositol 4-phosphate, bisphosphorylated phosphatidylinositols, such as phosphatidylinositol (4,5)-bisphosphate, as well as phosphatidylinositol (3,4,5)-bisphosphate, and more weakly to phosphatidic acid and phosphatidylserine (PubMed:27339137, PubMed:27383986). Homooligomerizes within the membrane and forms pores of 10-15 nanometers (nm) of inner diameter, allowing the release of mature interleukin-1 (IL1B and IL18) and triggering pyroptosis (PubMed:27383986, PubMed:29195811, PubMed:29274245, PubMed:33883744, PubMed:38530158, PubMed:38538834). Gasdermin pores also allow the release of mature caspase-7 (CASP7) (PubMed:35705808). In some, but not all, cells types, pyroptosis is followed by pyroptotic cell death, which is caused by downstream activation of ninjurin-1 (NINJ1), which mediates membrane rupture (cytolysis) (PubMed:38632402). Also forms pores in the mitochondrial membrane, resulting in release of mitochondrial DNA (mtDNA) into the cytosol (PubMed:37001519). Gasdermin-D, N-terminal released from pyroptotic cells into the extracellular milieu rapidly binds to and kills both Gram-negative and Gram-positive bacteria, without harming neighboring mammalian cells, as it does not disrupt the plasma membrane from the outside due to lipid-binding specificity (PubMed:27383986). Under cell culture conditions, also active against intracellular bacteria, such as Listeria monocytogenes (PubMed:27383986). Also active in response to MAP3K7/TAK1 inactivation by Yersinia toxin YopJ, which triggers cleavage by CASP8 and subsequent activation (PubMed:30361383, PubMed:30381458). Required for mucosal tissue defense against enteric pathogens (PubMed:37988464). Activation of the non-canonical inflammasome in brain endothelial cells can lead to excessive pyroptosis, leading to blood-brain barrier breakdown (PubMed:38632402). Strongly binds to bacterial and mitochondrial lipids, including cardiolipin. Does not bind to unphosphorylated phosphatidylinositol, phosphatidylethanolamine nor phosphatidylcholine (PubMed:27383986).</text>
</comment>
<comment type="function">
    <molecule>Gasdermin-D, p13</molecule>
    <text evidence="28">Transcription coactivator produced by the cleavage by CASP3 or CASP7 in the upper small intestine in response to dietary antigens (PubMed:37327784). Required to maintain food tolerance in small intestine: translocates to the nucleus and acts as a coactivator for STAT1 to induce the transcription of CIITA and MHC class II molecules, which in turn induce type 1 regulatory T (Tr1) cells in upper small intestine (PubMed:37327784).</text>
</comment>
<comment type="function">
    <molecule>Gasdermin-D, p40</molecule>
    <text evidence="23 24">Produced by the cleavage by papain allergen (PubMed:35794369). After cleavage, moves to the plasma membrane and homooligomerizes within the membrane and forms pores of 10-15 nanometers (nm) of inner diameter, allowing the specific release of mature interleukin-33 (IL33), promoting type 2 inflammatory immune response (PubMed:35749514, PubMed:35794369).</text>
</comment>
<comment type="activity regulation">
    <molecule>Gasdermin-D</molecule>
    <text evidence="1 3 4 5 12 14 15 16 17 18 30 34">The full-length protein before cleavage is inactive: intramolecular interactions between N- and C-terminal domains mediate autoinhibition in the absence of activation signal (PubMed:26375003, PubMed:26375259, PubMed:26611636, PubMed:29576317, PubMed:31097341). The intrinsic pyroptosis-inducing activity is carried by the released N-terminal moiety (Gasdermin-D, N-terminal) following cleavage by inflammatory caspases CASP1, CASP4/CASP11 or CASP8 (PubMed:26375003, PubMed:26375259, PubMed:26611636, PubMed:30361383, PubMed:30381458, PubMed:32553275, PubMed:32554464). Cleavage at Asp-88 by CASP3 or CASP7 inactivates the ability to mediate pyroptosis (By similarity). Pore formation is specifically inhibited by VHH(GSDMD-1) nanobody, protecting against excessive pyroptosis (PubMed:38632402). Inhibited by small molecule NU6300, which covalently reacts with Cys-191, thereby preventing palmitoylation and pyroptosis (PubMed:38324683).</text>
</comment>
<comment type="subunit">
    <molecule>Gasdermin-D, N-terminal</molecule>
    <text evidence="5 21">Homooligomer; homooligomeric ring-shaped pore complex containing 27-28 subunits when inserted in the membrane (PubMed:34289345). Homooligomerization is promoted by the mTORC1 complex in macrophages (PubMed:34289345). In response to a canonical inflammasome stimulus, such as nigericin, recruited to NLRP3 inflammasone with similar kinetics to that of uncleaved CASP1 precursor (PubMed:26611636). Although this recruitment is also observed in the absence of PYCARD, it is more efficient in its presence (PubMed:26611636).</text>
</comment>
<comment type="subcellular location">
    <molecule>Gasdermin-D</molecule>
    <subcellularLocation>
        <location evidence="7 9">Cytoplasm</location>
        <location evidence="7 9">Cytosol</location>
    </subcellularLocation>
    <subcellularLocation>
        <location evidence="5">Inflammasome</location>
    </subcellularLocation>
    <text evidence="5">In response to a canonical inflammasome stimulus, such as nigericin, recruited to NLRP3 inflammasone with similar kinetics to that of uncleaved CASP1 precursor.</text>
</comment>
<comment type="subcellular location">
    <molecule>Gasdermin-D, N-terminal</molecule>
    <subcellularLocation>
        <location evidence="6 7 9 31 32">Cell membrane</location>
        <topology evidence="1">Multi-pass membrane protein</topology>
    </subcellularLocation>
    <subcellularLocation>
        <location evidence="7">Secreted</location>
    </subcellularLocation>
    <subcellularLocation>
        <location evidence="27">Mitochondrion membrane</location>
    </subcellularLocation>
    <text evidence="7 27">Released in the extracellular milieu following pyroptosis (PubMed:27383986). Mitochondrial localization results in release of mitochondrial DNA into the cytosol (PubMed:37001519).</text>
</comment>
<comment type="subcellular location">
    <molecule>Gasdermin-D, N-terminal</molecule>
    <subcellularLocation>
        <location evidence="25">Cytoplasm</location>
        <location evidence="25">Cytosol</location>
    </subcellularLocation>
    <text evidence="25">(Microbial infection) Upon infection by M.tuberculosis, localization to cell membrane is prevented by M.tuberculosis phosphatase PtpB that catalyzes dephosphorylation of phosphatidylinositol (4,5)-bisphosphate and phosphatidylinositol 4-phosphate, thereby inhibiting the membrane targeting of Gasdermin-D, N-terminal and subsequent cytokine release and pyroptosis.</text>
</comment>
<comment type="subcellular location">
    <molecule>Gasdermin-D, p13</molecule>
    <subcellularLocation>
        <location evidence="28">Nucleus</location>
    </subcellularLocation>
</comment>
<comment type="subcellular location">
    <molecule>Gasdermin-D, C-terminal</molecule>
    <subcellularLocation>
        <location evidence="42">Cytoplasm</location>
        <location evidence="42">Cytosol</location>
    </subcellularLocation>
</comment>
<comment type="tissue specificity">
    <text evidence="34">Highly expressed in brain endothelial cells.</text>
</comment>
<comment type="developmental stage">
    <text evidence="2">Expression starts at 8.5 dpc and increases from 13.5 dpc on. Still detected after birth.</text>
</comment>
<comment type="domain">
    <text evidence="1 3 4 5 12 16">Intramolecular interactions between N- and C-terminal domains mediate autoinhibition in the absence of cleavage by inflammatory caspases CASP1 or CASP4/CASP11 (PubMed:26375003, PubMed:26375259, PubMed:26611636, PubMed:29576317, PubMed:31097341). The linker helix loop inserts into the N-terminal domain (By similarity). The intrinsic pyroptosis-inducing activity is carried by Gasdermin-D, N-terminal, that is released upon cleavage by inflammatory caspases (PubMed:26375003, PubMed:26375259, PubMed:26611636).</text>
</comment>
<comment type="domain">
    <molecule>Gasdermin-D, N-terminal</molecule>
    <text evidence="1">Forms a ring-shaped pore complex containing 27-28 subunits that inserts into the membrane. The pore conduit is predominantly negatively charged, facilitating the release of mature interleukin-1 (IL1B and IL18). In contrast interleukin-1 precursors are not released, due to the presence of an acidic region that is proteolytically removed by CASP1 during maturation.</text>
</comment>
<comment type="PTM">
    <text evidence="1 4 5 14 15 17 18 24 28">Cleavage at Asp-276 by CASP1 (mature and uncleaved precursor forms), CASP4/CASP11 or CASP8 relieves autoinhibition and is sufficient to initiate pyroptosis (PubMed:26375259, PubMed:26611636, PubMed:32553275, PubMed:32554464). Cleavage by CASP1 and CASP4/CASP11 is not strictly dependent on the consensus cleavage site on GSDMD but depends on an exosite interface on CASP1 that recognizes and binds the Gasdermin-D, C-terminal (GSDMD-CT) part (PubMed:32553275, PubMed:32554464). Cleavage by CASP8 takes place following inactivation of MAP3K7/TAK1 by Yersinia toxin YopJ (PubMed:30361383, PubMed:30381458). Cleavage at Asp-88 by CASP3 or CASP7 inactivates the ability to mediate pyroptosis, but generates the Gasdermin-D, p13 chain, which translocates to the nucleus and acts as a transcription regulator (PubMed:37327784). Cleavage by papain allergen generates the Gasdermin-D, p40 chain (PubMed:35794369).</text>
</comment>
<comment type="PTM">
    <molecule>Gasdermin-D</molecule>
    <text evidence="30 31 32 33">Palmitoylated at Cys-192 by ZDHHC5 and ZDHHC9 in response to microbial infection and danger signals (PubMed:38324683, PubMed:38530158, PubMed:38599239). May also be palmitoylated by ZDHHC7 (PubMed:38538834). Palmitoylation takes place before cleavage by caspases (CASP1, CASP4, CASP5 or CASP8) and is required for membrane translocation and pore formation (PubMed:38324683, PubMed:38530158, PubMed:38538834, PubMed:38599239). Depalmitoylated by LYPLA2 (PubMed:38538834).</text>
</comment>
<comment type="PTM">
    <molecule>Gasdermin-D</molecule>
    <text evidence="19">Succination of Cys-192 by the Krebs cycle intermediate fumarate, which leads to S-(2-succinyl)cysteine residues, inhibits processing by caspases, and ability to initiate pyroptosis (PubMed:32820063). Succination modification is catalyzed by a non-enzymatic reaction caused by an accumulation of fumarate (PubMed:32820063).</text>
</comment>
<comment type="PTM">
    <text evidence="1">Glycosylated: O-GlcNAcylation by OGT leads to reduced cleavage by CASP4 and decreased LPS-induced endothelial cell pyroptosis.</text>
</comment>
<comment type="disruption phenotype">
    <text evidence="2 3 4 29 34">Knockout mice are born at the expected Mendelian rate and do not exhibit any overt phenotype in normal housing conditions (PubMed:18693275, PubMed:26375003, PubMed:26375259). The gastrointestinal tract develops normally (PubMed:18693275, PubMed:26375003, PubMed:26375259). They are however resistant to LPS-induced lethal septic shock (PubMed:26375259). Primary bone marrow-derived macrophages fail to undergo pyroptosis in response to canonical (acting via CASP1), as well as to non-canonical (acting via CASP4) inflammasome activators (PubMed:18693275, PubMed:26375003, PubMed:26375259). CASP1-mediated IL1B release is also impaired, but not CASP1 autoprocessing, nor IL1B maturation (PubMed:18693275, PubMed:26375003, PubMed:26375259). Reduced ability to protect against acute S.typhimurium infection in the gut (PubMed:37988464). Increased resistance of the blood-brain barrier following infection, due to decreased non-canonical inflammasome activation and pyroptosis of endothelial cells (PubMed:38632402).</text>
</comment>
<comment type="similarity">
    <text evidence="41">Belongs to the gasdermin family.</text>
</comment>
<organism>
    <name type="scientific">Mus musculus</name>
    <name type="common">Mouse</name>
    <dbReference type="NCBI Taxonomy" id="10090"/>
    <lineage>
        <taxon>Eukaryota</taxon>
        <taxon>Metazoa</taxon>
        <taxon>Chordata</taxon>
        <taxon>Craniata</taxon>
        <taxon>Vertebrata</taxon>
        <taxon>Euteleostomi</taxon>
        <taxon>Mammalia</taxon>
        <taxon>Eutheria</taxon>
        <taxon>Euarchontoglires</taxon>
        <taxon>Glires</taxon>
        <taxon>Rodentia</taxon>
        <taxon>Myomorpha</taxon>
        <taxon>Muroidea</taxon>
        <taxon>Muridae</taxon>
        <taxon>Murinae</taxon>
        <taxon>Mus</taxon>
        <taxon>Mus</taxon>
    </lineage>
</organism>
<evidence type="ECO:0000250" key="1">
    <source>
        <dbReference type="UniProtKB" id="P57764"/>
    </source>
</evidence>
<evidence type="ECO:0000269" key="2">
    <source>
    </source>
</evidence>
<evidence type="ECO:0000269" key="3">
    <source>
    </source>
</evidence>
<evidence type="ECO:0000269" key="4">
    <source>
    </source>
</evidence>
<evidence type="ECO:0000269" key="5">
    <source>
    </source>
</evidence>
<evidence type="ECO:0000269" key="6">
    <source>
    </source>
</evidence>
<evidence type="ECO:0000269" key="7">
    <source>
    </source>
</evidence>
<evidence type="ECO:0000269" key="8">
    <source>
    </source>
</evidence>
<evidence type="ECO:0000269" key="9">
    <source>
    </source>
</evidence>
<evidence type="ECO:0000269" key="10">
    <source>
    </source>
</evidence>
<evidence type="ECO:0000269" key="11">
    <source>
    </source>
</evidence>
<evidence type="ECO:0000269" key="12">
    <source>
    </source>
</evidence>
<evidence type="ECO:0000269" key="13">
    <source>
    </source>
</evidence>
<evidence type="ECO:0000269" key="14">
    <source>
    </source>
</evidence>
<evidence type="ECO:0000269" key="15">
    <source>
    </source>
</evidence>
<evidence type="ECO:0000269" key="16">
    <source>
    </source>
</evidence>
<evidence type="ECO:0000269" key="17">
    <source>
    </source>
</evidence>
<evidence type="ECO:0000269" key="18">
    <source>
    </source>
</evidence>
<evidence type="ECO:0000269" key="19">
    <source>
    </source>
</evidence>
<evidence type="ECO:0000269" key="20">
    <source>
    </source>
</evidence>
<evidence type="ECO:0000269" key="21">
    <source>
    </source>
</evidence>
<evidence type="ECO:0000269" key="22">
    <source>
    </source>
</evidence>
<evidence type="ECO:0000269" key="23">
    <source>
    </source>
</evidence>
<evidence type="ECO:0000269" key="24">
    <source>
    </source>
</evidence>
<evidence type="ECO:0000269" key="25">
    <source>
    </source>
</evidence>
<evidence type="ECO:0000269" key="26">
    <source>
    </source>
</evidence>
<evidence type="ECO:0000269" key="27">
    <source>
    </source>
</evidence>
<evidence type="ECO:0000269" key="28">
    <source>
    </source>
</evidence>
<evidence type="ECO:0000269" key="29">
    <source>
    </source>
</evidence>
<evidence type="ECO:0000269" key="30">
    <source>
    </source>
</evidence>
<evidence type="ECO:0000269" key="31">
    <source>
    </source>
</evidence>
<evidence type="ECO:0000269" key="32">
    <source>
    </source>
</evidence>
<evidence type="ECO:0000269" key="33">
    <source>
    </source>
</evidence>
<evidence type="ECO:0000269" key="34">
    <source>
    </source>
</evidence>
<evidence type="ECO:0000303" key="35">
    <source>
    </source>
</evidence>
<evidence type="ECO:0000303" key="36">
    <source>
    </source>
</evidence>
<evidence type="ECO:0000303" key="37">
    <source>
    </source>
</evidence>
<evidence type="ECO:0000303" key="38">
    <source>
    </source>
</evidence>
<evidence type="ECO:0000303" key="39">
    <source>
    </source>
</evidence>
<evidence type="ECO:0000303" key="40">
    <source>
    </source>
</evidence>
<evidence type="ECO:0000305" key="41"/>
<evidence type="ECO:0000305" key="42">
    <source>
    </source>
</evidence>
<evidence type="ECO:0000305" key="43">
    <source>
    </source>
</evidence>
<evidence type="ECO:0000305" key="44">
    <source>
    </source>
</evidence>
<evidence type="ECO:0000305" key="45">
    <source>
    </source>
</evidence>
<evidence type="ECO:0000305" key="46">
    <source>
    </source>
</evidence>
<evidence type="ECO:0000305" key="47">
    <source>
    </source>
</evidence>
<evidence type="ECO:0000312" key="48">
    <source>
        <dbReference type="MGI" id="MGI:1916396"/>
    </source>
</evidence>
<evidence type="ECO:0007744" key="49">
    <source>
        <dbReference type="PDB" id="6AO3"/>
    </source>
</evidence>
<evidence type="ECO:0007744" key="50">
    <source>
        <dbReference type="PDB" id="6KMV"/>
    </source>
</evidence>
<evidence type="ECO:0007744" key="51">
    <source>
        <dbReference type="PDB" id="6N9N"/>
    </source>
</evidence>
<evidence type="ECO:0007744" key="52">
    <source>
        <dbReference type="PDB" id="6VIE"/>
    </source>
</evidence>
<evidence type="ECO:0007829" key="53">
    <source>
        <dbReference type="PDB" id="6AO3"/>
    </source>
</evidence>
<evidence type="ECO:0007829" key="54">
    <source>
        <dbReference type="PDB" id="6KMV"/>
    </source>
</evidence>
<evidence type="ECO:0007829" key="55">
    <source>
        <dbReference type="PDB" id="6N9N"/>
    </source>
</evidence>
<evidence type="ECO:0007829" key="56">
    <source>
        <dbReference type="PDB" id="6VIE"/>
    </source>
</evidence>
<sequence>MPSAFEKVVKNVIKEVSGSRGDLIPVDSLRNSTSFRPYCLLNRKFSSSRFWKPRYSCVNLSIKDILEPSAPEPEPECFGSFKVSDVVDGNIQGRVMLSGMGEGKISGGAAVSDSSSASMNVCILRVTQKTWETMQHERHLQQPENKILQQLRSRGDDLFVVTEVLQTKEEVQITEVHSQEGSGQFTLPGALCLKGEGKGHQSRKKMVTIPAGSILAFRVAQLLIGSKWDILLVSDEKQRTFEPSSGDRKAVGQRHHGLNVLAALCSIGKQLSLLSDGIDEEELIEAADFQGLYAEVKACSSELESLEMELRQQILVNIGKILQDQPSMEALEASLGQGLCSGGQVEPLDGPAGCILECLVLDSGELVPELAAPIFYLLGALAVLSETQQQLLAKALETTVLSKQLELVKHVLEQSTPWQEQSSVSLPTVLLGDCWDEKNPTWVLLEECGLRLQVESPQVHWEPTSLIPTSALYASLFLLSSLGQKPC</sequence>
<feature type="chain" id="PRO_0000148176" description="Gasdermin-D">
    <location>
        <begin position="1"/>
        <end position="487"/>
    </location>
</feature>
<feature type="chain" id="PRO_0000459020" description="Gasdermin-D, p40" evidence="46">
    <location>
        <begin position="1"/>
        <end position="310"/>
    </location>
</feature>
<feature type="chain" id="PRO_0000437528" description="Gasdermin-D, N-terminal" evidence="43 44 45">
    <location>
        <begin position="1"/>
        <end position="276"/>
    </location>
</feature>
<feature type="chain" id="PRO_0000459019" description="Gasdermin-D, p13" evidence="47">
    <location>
        <begin position="1"/>
        <end position="88"/>
    </location>
</feature>
<feature type="chain" id="PRO_0000437529" description="Gasdermin-D, C-terminal" evidence="43 44 45">
    <location>
        <begin position="277"/>
        <end position="487"/>
    </location>
</feature>
<feature type="transmembrane region" description="Beta stranded" evidence="1">
    <location>
        <begin position="92"/>
        <end position="98"/>
    </location>
</feature>
<feature type="transmembrane region" description="Beta stranded" evidence="1">
    <location>
        <begin position="104"/>
        <end position="109"/>
    </location>
</feature>
<feature type="transmembrane region" description="Beta stranded" evidence="1">
    <location>
        <begin position="181"/>
        <end position="187"/>
    </location>
</feature>
<feature type="transmembrane region" description="Beta stranded" evidence="1">
    <location>
        <begin position="192"/>
        <end position="198"/>
    </location>
</feature>
<feature type="region of interest" description="Linker helix loop" evidence="1">
    <location>
        <begin position="278"/>
        <end position="298"/>
    </location>
</feature>
<feature type="site" description="Cleavage; by CASP3 or CASP7" evidence="28">
    <location>
        <begin position="88"/>
        <end position="89"/>
    </location>
</feature>
<feature type="site" description="Cleavage; by caspases CASP1, CASP4/CASP11 and CASP8" evidence="4 14 17 32 44">
    <location>
        <begin position="276"/>
        <end position="277"/>
    </location>
</feature>
<feature type="site" description="Cleavage; by papain" evidence="24">
    <location>
        <begin position="310"/>
        <end position="311"/>
    </location>
</feature>
<feature type="modified residue" description="Phosphotyrosine" evidence="1">
    <location>
        <position position="38"/>
    </location>
</feature>
<feature type="modified residue" description="S-(2-succinyl)cysteine" evidence="19">
    <location>
        <position position="39"/>
    </location>
</feature>
<feature type="modified residue" description="S-(2-succinyl)cysteine" evidence="19">
    <location>
        <position position="57"/>
    </location>
</feature>
<feature type="modified residue" description="S-(2-succinyl)cysteine" evidence="19">
    <location>
        <position position="77"/>
    </location>
</feature>
<feature type="modified residue" description="S-(2-succinyl)cysteine" evidence="19">
    <location>
        <position position="122"/>
    </location>
</feature>
<feature type="modified residue" description="S-(2-succinyl)cysteine" evidence="19">
    <location>
        <position position="192"/>
    </location>
</feature>
<feature type="modified residue" description="S-(2-succinyl)cysteine" evidence="19">
    <location>
        <position position="265"/>
    </location>
</feature>
<feature type="modified residue" description="S-(2-succinyl)cysteine" evidence="19">
    <location>
        <position position="299"/>
    </location>
</feature>
<feature type="modified residue" description="S-(2-succinyl)cysteine" evidence="19">
    <location>
        <position position="434"/>
    </location>
</feature>
<feature type="modified residue" description="S-(2-succinyl)cysteine" evidence="19">
    <location>
        <position position="487"/>
    </location>
</feature>
<feature type="lipid moiety-binding region" description="S-palmitoyl cysteine" evidence="31 32 33">
    <location>
        <position position="192"/>
    </location>
</feature>
<feature type="mutagenesis site" description="Reduced ability to induct pyroptosis." evidence="16">
    <original>KVVKNVIK</original>
    <variation>AVVANVIA</variation>
    <location>
        <begin position="7"/>
        <end position="14"/>
    </location>
</feature>
<feature type="mutagenesis site" description="Renders Gsdmd susceptible to ubiquitination by S.flexneri IpaH7.8." evidence="26">
    <original>SGSR</original>
    <variation>DGS</variation>
    <location>
        <begin position="17"/>
        <end position="20"/>
    </location>
</feature>
<feature type="mutagenesis site" description="Reduced homoolimerization, leading to reduced ability to induce pyroptosis." evidence="16">
    <original>L</original>
    <variation>A</variation>
    <location>
        <position position="29"/>
    </location>
</feature>
<feature type="mutagenesis site" description="Loss of oligomerization of Gasdermin-D, N-terminal." evidence="7">
    <original>C</original>
    <variation>A</variation>
    <location>
        <position position="39"/>
    </location>
</feature>
<feature type="mutagenesis site" description="Reduced ability to induce pyroptosis." evidence="16">
    <original>RKFSSSRFWKPR</original>
    <variation>AAFSSSRFWAPA</variation>
    <location>
        <begin position="43"/>
        <end position="54"/>
    </location>
</feature>
<feature type="mutagenesis site" description="Abolished ability to form a pore, leading to educed ability to induce pyroptosis." evidence="16 20">
    <original>FW</original>
    <variation>GG</variation>
    <location>
        <begin position="50"/>
        <end position="51"/>
    </location>
</feature>
<feature type="mutagenesis site" description="No effect on oligomerization." evidence="7">
    <original>C</original>
    <variation>A</variation>
    <location>
        <position position="57"/>
    </location>
</feature>
<feature type="mutagenesis site" description="Reduced homoolimerization, leading to reduced ability to induce pyroptosis." evidence="16">
    <original>L</original>
    <variation>G</variation>
    <location>
        <position position="60"/>
    </location>
</feature>
<feature type="mutagenesis site" description="No effect on oligomerization." evidence="7">
    <original>C</original>
    <variation>A</variation>
    <location>
        <position position="77"/>
    </location>
</feature>
<feature type="mutagenesis site" description="Reduced homoolimerization, leading to reduced ability to induce pyroptosis." evidence="16">
    <original>F</original>
    <variation>D</variation>
    <location>
        <position position="81"/>
    </location>
</feature>
<feature type="mutagenesis site" description="Abolished cleavage by CASP3 and CASP7." evidence="28">
    <original>DVVD</original>
    <variation>AAAA</variation>
    <location>
        <begin position="85"/>
        <end position="88"/>
    </location>
</feature>
<feature type="mutagenesis site" description="Reduced homoolimerization, leading to reduced ability to induce pyroptosis." evidence="16">
    <original>I</original>
    <variation>D</variation>
    <location>
        <position position="91"/>
    </location>
</feature>
<feature type="mutagenesis site" description="Reduced homoolimerization, leading to reduced ability to induce pyroptosis." evidence="16">
    <original>V</original>
    <variation>D</variation>
    <location>
        <position position="95"/>
    </location>
</feature>
<feature type="mutagenesis site" description="Reduced ability to induce pyroptosis. No effect on protein expression. No effect on cleavage by CASP4." evidence="4 12">
    <original>I</original>
    <variation>N</variation>
    <location>
        <position position="105"/>
    </location>
</feature>
<feature type="mutagenesis site" description="No effect on oligomerization." evidence="7">
    <original>C</original>
    <variation>A</variation>
    <location>
        <position position="122"/>
    </location>
</feature>
<feature type="mutagenesis site" description="Complete loss of homooligomerization, lipid-binding, relocalization of Gasdermin-D, N-terminal to the plasma membrane and pyroptosis, as well as loss of bactericidal activity; when associated with A-146; A-152 and A-154. Partial loss of homooligomerization and pyroptosis; when associated with A-146." evidence="7">
    <original>R</original>
    <variation>A</variation>
    <variation>S</variation>
    <location>
        <position position="138"/>
    </location>
</feature>
<feature type="mutagenesis site" description="Complete loss of homooligomerization, lipid-binding, relocalization of Gasdermin-D, N-terminal to the plasma membrane and pyroptosis, as well as loss of bactericidal activity; when associated with A-138 or with S-138; A-152 and A-154. Partial loss of homooligomerization and pyroptosis; when associated with A-138, with A-152 or with A-152 and A-154." evidence="7">
    <original>K</original>
    <variation>A</variation>
    <location>
        <position position="146"/>
    </location>
</feature>
<feature type="mutagenesis site" description="Complete loss of homooligomerization, lipid-binding, relocalization of Gasdermin-D, N-terminal to the plasma membrane and pyroptosis, as well as loss of bactericidal activity; when associated with A-138 or with S-138; A-146 and A-154. Partial loss of homooligomerization and pyroptosis; when associated with A-146 or with A-154, or with A-146 and A-154." evidence="7">
    <original>R</original>
    <variation>A</variation>
    <location>
        <position position="152"/>
    </location>
</feature>
<feature type="mutagenesis site" description="Complete loss of homooligomerization, lipid-binding, relocalization of Gasdermin-D, N-terminal to the plasma membrane and pyroptosis, as well as loss of bactericidal activity; when associated with A-138 or with S-138; A-146 and A-152. Partial loss of homooligomerization and pyroptosis; when associated with A-152 or with A-146 and A-152." evidence="7">
    <original>R</original>
    <variation>A</variation>
    <location>
        <position position="154"/>
    </location>
</feature>
<feature type="mutagenesis site" description="Loss of oligomerization of Gasdermin-D, N-terminal. Abolished palmitoylation and ability to form a pore and mediate pyroptosis." evidence="7 19 31 32">
    <original>C</original>
    <variation>A</variation>
    <location>
        <position position="192"/>
    </location>
</feature>
<feature type="mutagenesis site" description="Reduced homoolimerization, leading to reduced ability to induce pyroptosis." evidence="16">
    <original>L</original>
    <variation>D</variation>
    <location>
        <position position="193"/>
    </location>
</feature>
<feature type="mutagenesis site" description="Reduced homoolimerization, leading to reduced ability to induce pyroptosis." evidence="16">
    <original>ILLV</original>
    <variation>ALLA</variation>
    <location>
        <begin position="230"/>
        <end position="233"/>
    </location>
</feature>
<feature type="mutagenesis site" description="No effect on pyroptosis; when associated with A-239 or with A-239; A-248 and A-249." evidence="7">
    <original>K</original>
    <variation>A</variation>
    <location>
        <position position="237"/>
    </location>
</feature>
<feature type="mutagenesis site" description="No effect on pyroptosis; when associated with A-237 or with A-237; A-248 and A-249." evidence="7">
    <original>R</original>
    <variation>A</variation>
    <location>
        <position position="239"/>
    </location>
</feature>
<feature type="mutagenesis site" description="No effect on pyroptosis; when associated with A-237; A-239 and A-249." evidence="7">
    <original>R</original>
    <variation>A</variation>
    <location>
        <position position="248"/>
    </location>
</feature>
<feature type="mutagenesis site" description="No effect on pyroptosis; when associated with A-237; A-239 and A-248." evidence="7">
    <original>K</original>
    <variation>A</variation>
    <location>
        <position position="249"/>
    </location>
</feature>
<feature type="mutagenesis site" description="No effect on oligomerization." evidence="7">
    <original>C</original>
    <variation>A</variation>
    <location>
        <position position="265"/>
    </location>
</feature>
<feature type="mutagenesis site" description="Impaired interaction and cleavage by CASP1." evidence="17">
    <original>L</original>
    <variation>A</variation>
    <location>
        <position position="273"/>
    </location>
</feature>
<feature type="mutagenesis site" description="Loss of CASP1-induced cleavage, pyroptosis and IL1B release. Does not impair interaction with CASP1. Loss of CASP4/CASP11-induced cleavage. Abolished ability to induce pyroptosis following inactivation of MAP3K7/TAK1 by Yersinia toxin YopJ." evidence="4 5 13 14 17 32">
    <original>D</original>
    <variation>A</variation>
    <variation>N</variation>
    <location>
        <position position="276"/>
    </location>
</feature>
<feature type="mutagenesis site" description="Disrupts intramolecular interactions and autoinhibition, leading to spontaneous pyroptosis-inducing activity." evidence="16">
    <original>L</original>
    <variation>D</variation>
    <location>
        <position position="292"/>
    </location>
</feature>
<feature type="mutagenesis site" description="Disrupts intramolecular interactions and autoinhibition, leading to spontaneous pyroptosis-inducing activity." evidence="16">
    <original>E</original>
    <variation>R</variation>
    <location>
        <position position="295"/>
    </location>
</feature>
<feature type="mutagenesis site" description="In 5A mutant; abolished interaction with CASP1; when associated with 361-L--L370." evidence="17">
    <original>LEMEL</original>
    <variation>AEMEA</variation>
    <location>
        <begin position="306"/>
        <end position="310"/>
    </location>
</feature>
<feature type="mutagenesis site" description="Abolished generation of the Gasdermin-D, p40 chain and ability to promote secretion of IL33." evidence="24">
    <original>ELRQQ</original>
    <variation>AAAAA</variation>
    <location>
        <begin position="309"/>
        <end position="313"/>
    </location>
</feature>
<feature type="mutagenesis site" description="Abolished generation of the Gasdermin-D, p40 chain and ability to promote secretion of IL33." evidence="24">
    <location>
        <begin position="309"/>
        <end position="313"/>
    </location>
</feature>
<feature type="mutagenesis site" description="In 5A mutant; abolished interaction with CASP1; when associated with 306-L--L310." evidence="17">
    <original>LDSGELVPEL</original>
    <variation>ADSGELAPEA</variation>
    <location>
        <begin position="361"/>
        <end position="370"/>
    </location>
</feature>
<feature type="mutagenesis site" description="Impaired interaction and cleavage by CASP1." evidence="17">
    <original>E</original>
    <variation>K</variation>
    <location>
        <position position="369"/>
    </location>
</feature>
<feature type="mutagenesis site" description="Spontaneous pyroptosis-inducing activity." evidence="12">
    <original>Y</original>
    <variation>D</variation>
    <location>
        <position position="376"/>
    </location>
</feature>
<feature type="mutagenesis site" description="Disrupts intramolecular interactions and autoinhibition, leading to spontaneous pyroptosis-inducing activity." evidence="16">
    <original>A</original>
    <variation>D</variation>
    <location>
        <position position="380"/>
    </location>
</feature>
<feature type="mutagenesis site" description="Disrupts intramolecular interactions and autoinhibition, leading to spontaneous pyroptosis-inducing activity." evidence="16">
    <original>S</original>
    <variation>R</variation>
    <location>
        <position position="470"/>
    </location>
</feature>
<feature type="mutagenesis site" description="Disrupts intramolecular interactions and autoinhibition, leading to spontaneous pyroptosis-inducing activity." evidence="16">
    <original>A</original>
    <variation>D</variation>
    <location>
        <position position="474"/>
    </location>
</feature>
<feature type="helix" evidence="55">
    <location>
        <begin position="6"/>
        <end position="15"/>
    </location>
</feature>
<feature type="strand" evidence="55">
    <location>
        <begin position="19"/>
        <end position="21"/>
    </location>
</feature>
<feature type="helix" evidence="55">
    <location>
        <begin position="32"/>
        <end position="35"/>
    </location>
</feature>
<feature type="strand" evidence="55">
    <location>
        <begin position="40"/>
        <end position="43"/>
    </location>
</feature>
<feature type="turn" evidence="55">
    <location>
        <begin position="63"/>
        <end position="65"/>
    </location>
</feature>
<feature type="strand" evidence="55">
    <location>
        <begin position="66"/>
        <end position="68"/>
    </location>
</feature>
<feature type="strand" evidence="55">
    <location>
        <begin position="87"/>
        <end position="89"/>
    </location>
</feature>
<feature type="strand" evidence="55">
    <location>
        <begin position="119"/>
        <end position="125"/>
    </location>
</feature>
<feature type="helix" evidence="55">
    <location>
        <begin position="128"/>
        <end position="137"/>
    </location>
</feature>
<feature type="helix" evidence="55">
    <location>
        <begin position="148"/>
        <end position="152"/>
    </location>
</feature>
<feature type="turn" evidence="55">
    <location>
        <begin position="153"/>
        <end position="155"/>
    </location>
</feature>
<feature type="strand" evidence="55">
    <location>
        <begin position="157"/>
        <end position="167"/>
    </location>
</feature>
<feature type="strand" evidence="55">
    <location>
        <begin position="171"/>
        <end position="173"/>
    </location>
</feature>
<feature type="strand" evidence="55">
    <location>
        <begin position="207"/>
        <end position="209"/>
    </location>
</feature>
<feature type="strand" evidence="55">
    <location>
        <begin position="214"/>
        <end position="223"/>
    </location>
</feature>
<feature type="strand" evidence="55">
    <location>
        <begin position="225"/>
        <end position="227"/>
    </location>
</feature>
<feature type="strand" evidence="55">
    <location>
        <begin position="229"/>
        <end position="233"/>
    </location>
</feature>
<feature type="strand" evidence="56">
    <location>
        <begin position="274"/>
        <end position="277"/>
    </location>
</feature>
<feature type="strand" evidence="54">
    <location>
        <begin position="280"/>
        <end position="285"/>
    </location>
</feature>
<feature type="helix" evidence="53">
    <location>
        <begin position="289"/>
        <end position="304"/>
    </location>
</feature>
<feature type="helix" evidence="53">
    <location>
        <begin position="308"/>
        <end position="321"/>
    </location>
</feature>
<feature type="helix" evidence="53">
    <location>
        <begin position="325"/>
        <end position="341"/>
    </location>
</feature>
<feature type="helix" evidence="53">
    <location>
        <begin position="350"/>
        <end position="356"/>
    </location>
</feature>
<feature type="helix" evidence="53">
    <location>
        <begin position="357"/>
        <end position="359"/>
    </location>
</feature>
<feature type="strand" evidence="53">
    <location>
        <begin position="364"/>
        <end position="366"/>
    </location>
</feature>
<feature type="helix" evidence="53">
    <location>
        <begin position="368"/>
        <end position="383"/>
    </location>
</feature>
<feature type="helix" evidence="53">
    <location>
        <begin position="386"/>
        <end position="396"/>
    </location>
</feature>
<feature type="helix" evidence="53">
    <location>
        <begin position="400"/>
        <end position="414"/>
    </location>
</feature>
<feature type="strand" evidence="56">
    <location>
        <begin position="418"/>
        <end position="420"/>
    </location>
</feature>
<feature type="strand" evidence="53">
    <location>
        <begin position="422"/>
        <end position="424"/>
    </location>
</feature>
<feature type="helix" evidence="53">
    <location>
        <begin position="428"/>
        <end position="431"/>
    </location>
</feature>
<feature type="strand" evidence="56">
    <location>
        <begin position="436"/>
        <end position="439"/>
    </location>
</feature>
<feature type="helix" evidence="53">
    <location>
        <begin position="440"/>
        <end position="446"/>
    </location>
</feature>
<feature type="turn" evidence="53">
    <location>
        <begin position="447"/>
        <end position="449"/>
    </location>
</feature>
<feature type="strand" evidence="53">
    <location>
        <begin position="454"/>
        <end position="457"/>
    </location>
</feature>
<feature type="strand" evidence="53">
    <location>
        <begin position="459"/>
        <end position="461"/>
    </location>
</feature>
<feature type="helix" evidence="53">
    <location>
        <begin position="463"/>
        <end position="465"/>
    </location>
</feature>
<feature type="helix" evidence="53">
    <location>
        <begin position="466"/>
        <end position="482"/>
    </location>
</feature>
<gene>
    <name evidence="35 48" type="primary">Gsdmd</name>
    <name type="synonym">Gsdmdc1</name>
</gene>
<dbReference type="EMBL" id="AK007710">
    <property type="protein sequence ID" value="BAB25204.1"/>
    <property type="molecule type" value="mRNA"/>
</dbReference>
<dbReference type="EMBL" id="AK165858">
    <property type="protein sequence ID" value="BAE38418.1"/>
    <property type="molecule type" value="mRNA"/>
</dbReference>
<dbReference type="EMBL" id="AK171294">
    <property type="protein sequence ID" value="BAE42374.1"/>
    <property type="molecule type" value="mRNA"/>
</dbReference>
<dbReference type="EMBL" id="BC029813">
    <property type="protein sequence ID" value="AAH29813.1"/>
    <property type="molecule type" value="mRNA"/>
</dbReference>
<dbReference type="CCDS" id="CCDS27551.1"/>
<dbReference type="RefSeq" id="NP_081236.1">
    <property type="nucleotide sequence ID" value="NM_026960.4"/>
</dbReference>
<dbReference type="PDB" id="6AO3">
    <property type="method" value="X-ray"/>
    <property type="resolution" value="1.76 A"/>
    <property type="chains" value="A/B/C/D=277-487"/>
</dbReference>
<dbReference type="PDB" id="6KMV">
    <property type="method" value="X-ray"/>
    <property type="resolution" value="3.35 A"/>
    <property type="chains" value="C/G/O=287-484, D/K/S/T/W/b/f=288-484, H=294-484, L/P/e=271-484, X=286-484, a=289-484"/>
</dbReference>
<dbReference type="PDB" id="6N9N">
    <property type="method" value="X-ray"/>
    <property type="resolution" value="3.30 A"/>
    <property type="chains" value="A/B=1-487"/>
</dbReference>
<dbReference type="PDB" id="6VIE">
    <property type="method" value="X-ray"/>
    <property type="resolution" value="3.40 A"/>
    <property type="chains" value="C/D=1-487"/>
</dbReference>
<dbReference type="PDBsum" id="6AO3"/>
<dbReference type="PDBsum" id="6KMV"/>
<dbReference type="PDBsum" id="6N9N"/>
<dbReference type="PDBsum" id="6VIE"/>
<dbReference type="SMR" id="Q9D8T2"/>
<dbReference type="BioGRID" id="213254">
    <property type="interactions" value="2"/>
</dbReference>
<dbReference type="DIP" id="DIP-61777N"/>
<dbReference type="FunCoup" id="Q9D8T2">
    <property type="interactions" value="221"/>
</dbReference>
<dbReference type="IntAct" id="Q9D8T2">
    <property type="interactions" value="2"/>
</dbReference>
<dbReference type="STRING" id="10090.ENSMUSP00000023238"/>
<dbReference type="ChEMBL" id="CHEMBL4523446"/>
<dbReference type="DrugCentral" id="Q9D8T2"/>
<dbReference type="GuidetoPHARMACOLOGY" id="3278"/>
<dbReference type="GlyGen" id="Q9D8T2">
    <property type="glycosylation" value="1 site, 1 O-linked glycan (1 site)"/>
</dbReference>
<dbReference type="iPTMnet" id="Q9D8T2"/>
<dbReference type="PhosphoSitePlus" id="Q9D8T2"/>
<dbReference type="SwissPalm" id="Q9D8T2"/>
<dbReference type="PaxDb" id="10090-ENSMUSP00000023238"/>
<dbReference type="PeptideAtlas" id="Q9D8T2"/>
<dbReference type="ProteomicsDB" id="269843"/>
<dbReference type="ABCD" id="Q9D8T2">
    <property type="antibodies" value="1 sequenced antibody"/>
</dbReference>
<dbReference type="Antibodypedia" id="27909">
    <property type="antibodies" value="186 antibodies from 31 providers"/>
</dbReference>
<dbReference type="DNASU" id="69146"/>
<dbReference type="Ensembl" id="ENSMUST00000023238.6">
    <property type="protein sequence ID" value="ENSMUSP00000023238.5"/>
    <property type="gene ID" value="ENSMUSG00000022575.6"/>
</dbReference>
<dbReference type="GeneID" id="69146"/>
<dbReference type="KEGG" id="mmu:69146"/>
<dbReference type="UCSC" id="uc007whh.1">
    <property type="organism name" value="mouse"/>
</dbReference>
<dbReference type="AGR" id="MGI:1916396"/>
<dbReference type="CTD" id="79792"/>
<dbReference type="MGI" id="MGI:1916396">
    <property type="gene designation" value="Gsdmd"/>
</dbReference>
<dbReference type="VEuPathDB" id="HostDB:ENSMUSG00000022575"/>
<dbReference type="eggNOG" id="ENOG502S0IQ">
    <property type="taxonomic scope" value="Eukaryota"/>
</dbReference>
<dbReference type="GeneTree" id="ENSGT00950000183140"/>
<dbReference type="HOGENOM" id="CLU_040752_1_0_1"/>
<dbReference type="InParanoid" id="Q9D8T2"/>
<dbReference type="OMA" id="WTLLEEC"/>
<dbReference type="OrthoDB" id="9035105at2759"/>
<dbReference type="PhylomeDB" id="Q9D8T2"/>
<dbReference type="TreeFam" id="TF331886"/>
<dbReference type="Reactome" id="R-MMU-111457">
    <property type="pathway name" value="Release of apoptotic factors from the mitochondria"/>
</dbReference>
<dbReference type="Reactome" id="R-MMU-448706">
    <property type="pathway name" value="Interleukin-1 processing"/>
</dbReference>
<dbReference type="Reactome" id="R-MMU-5620971">
    <property type="pathway name" value="Pyroptosis"/>
</dbReference>
<dbReference type="Reactome" id="R-MMU-5686938">
    <property type="pathway name" value="Regulation of TLR by endogenous ligand"/>
</dbReference>
<dbReference type="Reactome" id="R-MMU-6798695">
    <property type="pathway name" value="Neutrophil degranulation"/>
</dbReference>
<dbReference type="BioGRID-ORCS" id="69146">
    <property type="hits" value="2 hits in 77 CRISPR screens"/>
</dbReference>
<dbReference type="PRO" id="PR:Q9D8T2"/>
<dbReference type="Proteomes" id="UP000000589">
    <property type="component" value="Chromosome 15"/>
</dbReference>
<dbReference type="RNAct" id="Q9D8T2">
    <property type="molecule type" value="protein"/>
</dbReference>
<dbReference type="Bgee" id="ENSMUSG00000022575">
    <property type="expression patterns" value="Expressed in small intestine Peyer's patch and 144 other cell types or tissues"/>
</dbReference>
<dbReference type="ExpressionAtlas" id="Q9D8T2">
    <property type="expression patterns" value="baseline and differential"/>
</dbReference>
<dbReference type="GO" id="GO:0005829">
    <property type="term" value="C:cytosol"/>
    <property type="evidence" value="ECO:0000314"/>
    <property type="project" value="UniProtKB"/>
</dbReference>
<dbReference type="GO" id="GO:0005615">
    <property type="term" value="C:extracellular space"/>
    <property type="evidence" value="ECO:0000314"/>
    <property type="project" value="UniProtKB"/>
</dbReference>
<dbReference type="GO" id="GO:0031966">
    <property type="term" value="C:mitochondrial membrane"/>
    <property type="evidence" value="ECO:0000314"/>
    <property type="project" value="UniProtKB"/>
</dbReference>
<dbReference type="GO" id="GO:0072559">
    <property type="term" value="C:NLRP3 inflammasome complex"/>
    <property type="evidence" value="ECO:0000314"/>
    <property type="project" value="UniProtKB"/>
</dbReference>
<dbReference type="GO" id="GO:0005654">
    <property type="term" value="C:nucleoplasm"/>
    <property type="evidence" value="ECO:0007669"/>
    <property type="project" value="Ensembl"/>
</dbReference>
<dbReference type="GO" id="GO:0005886">
    <property type="term" value="C:plasma membrane"/>
    <property type="evidence" value="ECO:0000314"/>
    <property type="project" value="UniProtKB"/>
</dbReference>
<dbReference type="GO" id="GO:1901612">
    <property type="term" value="F:cardiolipin binding"/>
    <property type="evidence" value="ECO:0000314"/>
    <property type="project" value="UniProtKB"/>
</dbReference>
<dbReference type="GO" id="GO:0070300">
    <property type="term" value="F:phosphatidic acid binding"/>
    <property type="evidence" value="ECO:0000314"/>
    <property type="project" value="UniProtKB"/>
</dbReference>
<dbReference type="GO" id="GO:0005546">
    <property type="term" value="F:phosphatidylinositol-4,5-bisphosphate binding"/>
    <property type="evidence" value="ECO:0000314"/>
    <property type="project" value="UniProtKB"/>
</dbReference>
<dbReference type="GO" id="GO:0070273">
    <property type="term" value="F:phosphatidylinositol-4-phosphate binding"/>
    <property type="evidence" value="ECO:0000314"/>
    <property type="project" value="UniProtKB"/>
</dbReference>
<dbReference type="GO" id="GO:0001786">
    <property type="term" value="F:phosphatidylserine binding"/>
    <property type="evidence" value="ECO:0000314"/>
    <property type="project" value="UniProtKB"/>
</dbReference>
<dbReference type="GO" id="GO:0022829">
    <property type="term" value="F:wide pore channel activity"/>
    <property type="evidence" value="ECO:0000314"/>
    <property type="project" value="UniProtKB"/>
</dbReference>
<dbReference type="GO" id="GO:0050829">
    <property type="term" value="P:defense response to Gram-negative bacterium"/>
    <property type="evidence" value="ECO:0000314"/>
    <property type="project" value="UniProtKB"/>
</dbReference>
<dbReference type="GO" id="GO:0050830">
    <property type="term" value="P:defense response to Gram-positive bacterium"/>
    <property type="evidence" value="ECO:0000314"/>
    <property type="project" value="UniProtKB"/>
</dbReference>
<dbReference type="GO" id="GO:0045087">
    <property type="term" value="P:innate immune response"/>
    <property type="evidence" value="ECO:0007669"/>
    <property type="project" value="UniProtKB-KW"/>
</dbReference>
<dbReference type="GO" id="GO:0046931">
    <property type="term" value="P:pore complex assembly"/>
    <property type="evidence" value="ECO:0000314"/>
    <property type="project" value="UniProtKB"/>
</dbReference>
<dbReference type="GO" id="GO:0050729">
    <property type="term" value="P:positive regulation of inflammatory response"/>
    <property type="evidence" value="ECO:0000314"/>
    <property type="project" value="UniProt"/>
</dbReference>
<dbReference type="GO" id="GO:0032731">
    <property type="term" value="P:positive regulation of interleukin-1 beta production"/>
    <property type="evidence" value="ECO:0000314"/>
    <property type="project" value="UniProtKB"/>
</dbReference>
<dbReference type="GO" id="GO:0051260">
    <property type="term" value="P:protein homooligomerization"/>
    <property type="evidence" value="ECO:0000314"/>
    <property type="project" value="UniProtKB"/>
</dbReference>
<dbReference type="GO" id="GO:0009306">
    <property type="term" value="P:protein secretion"/>
    <property type="evidence" value="ECO:0000314"/>
    <property type="project" value="UniProt"/>
</dbReference>
<dbReference type="GO" id="GO:0141201">
    <property type="term" value="P:pyroptotic cell death"/>
    <property type="evidence" value="ECO:0000314"/>
    <property type="project" value="UniProt"/>
</dbReference>
<dbReference type="GO" id="GO:0070269">
    <property type="term" value="P:pyroptotic inflammatory response"/>
    <property type="evidence" value="ECO:0000314"/>
    <property type="project" value="UniProtKB"/>
</dbReference>
<dbReference type="InterPro" id="IPR007677">
    <property type="entry name" value="Gasdermin"/>
</dbReference>
<dbReference type="InterPro" id="IPR040460">
    <property type="entry name" value="Gasdermin_pore"/>
</dbReference>
<dbReference type="InterPro" id="IPR041263">
    <property type="entry name" value="Gasdermin_PUB"/>
</dbReference>
<dbReference type="PANTHER" id="PTHR16399">
    <property type="entry name" value="GASDERMIN"/>
    <property type="match status" value="1"/>
</dbReference>
<dbReference type="PANTHER" id="PTHR16399:SF15">
    <property type="entry name" value="GASDERMIN-D"/>
    <property type="match status" value="1"/>
</dbReference>
<dbReference type="Pfam" id="PF04598">
    <property type="entry name" value="Gasdermin"/>
    <property type="match status" value="1"/>
</dbReference>
<dbReference type="Pfam" id="PF17708">
    <property type="entry name" value="Gasdermin_C"/>
    <property type="match status" value="1"/>
</dbReference>
<reference key="1">
    <citation type="journal article" date="2005" name="Science">
        <title>The transcriptional landscape of the mammalian genome.</title>
        <authorList>
            <person name="Carninci P."/>
            <person name="Kasukawa T."/>
            <person name="Katayama S."/>
            <person name="Gough J."/>
            <person name="Frith M.C."/>
            <person name="Maeda N."/>
            <person name="Oyama R."/>
            <person name="Ravasi T."/>
            <person name="Lenhard B."/>
            <person name="Wells C."/>
            <person name="Kodzius R."/>
            <person name="Shimokawa K."/>
            <person name="Bajic V.B."/>
            <person name="Brenner S.E."/>
            <person name="Batalov S."/>
            <person name="Forrest A.R."/>
            <person name="Zavolan M."/>
            <person name="Davis M.J."/>
            <person name="Wilming L.G."/>
            <person name="Aidinis V."/>
            <person name="Allen J.E."/>
            <person name="Ambesi-Impiombato A."/>
            <person name="Apweiler R."/>
            <person name="Aturaliya R.N."/>
            <person name="Bailey T.L."/>
            <person name="Bansal M."/>
            <person name="Baxter L."/>
            <person name="Beisel K.W."/>
            <person name="Bersano T."/>
            <person name="Bono H."/>
            <person name="Chalk A.M."/>
            <person name="Chiu K.P."/>
            <person name="Choudhary V."/>
            <person name="Christoffels A."/>
            <person name="Clutterbuck D.R."/>
            <person name="Crowe M.L."/>
            <person name="Dalla E."/>
            <person name="Dalrymple B.P."/>
            <person name="de Bono B."/>
            <person name="Della Gatta G."/>
            <person name="di Bernardo D."/>
            <person name="Down T."/>
            <person name="Engstrom P."/>
            <person name="Fagiolini M."/>
            <person name="Faulkner G."/>
            <person name="Fletcher C.F."/>
            <person name="Fukushima T."/>
            <person name="Furuno M."/>
            <person name="Futaki S."/>
            <person name="Gariboldi M."/>
            <person name="Georgii-Hemming P."/>
            <person name="Gingeras T.R."/>
            <person name="Gojobori T."/>
            <person name="Green R.E."/>
            <person name="Gustincich S."/>
            <person name="Harbers M."/>
            <person name="Hayashi Y."/>
            <person name="Hensch T.K."/>
            <person name="Hirokawa N."/>
            <person name="Hill D."/>
            <person name="Huminiecki L."/>
            <person name="Iacono M."/>
            <person name="Ikeo K."/>
            <person name="Iwama A."/>
            <person name="Ishikawa T."/>
            <person name="Jakt M."/>
            <person name="Kanapin A."/>
            <person name="Katoh M."/>
            <person name="Kawasawa Y."/>
            <person name="Kelso J."/>
            <person name="Kitamura H."/>
            <person name="Kitano H."/>
            <person name="Kollias G."/>
            <person name="Krishnan S.P."/>
            <person name="Kruger A."/>
            <person name="Kummerfeld S.K."/>
            <person name="Kurochkin I.V."/>
            <person name="Lareau L.F."/>
            <person name="Lazarevic D."/>
            <person name="Lipovich L."/>
            <person name="Liu J."/>
            <person name="Liuni S."/>
            <person name="McWilliam S."/>
            <person name="Madan Babu M."/>
            <person name="Madera M."/>
            <person name="Marchionni L."/>
            <person name="Matsuda H."/>
            <person name="Matsuzawa S."/>
            <person name="Miki H."/>
            <person name="Mignone F."/>
            <person name="Miyake S."/>
            <person name="Morris K."/>
            <person name="Mottagui-Tabar S."/>
            <person name="Mulder N."/>
            <person name="Nakano N."/>
            <person name="Nakauchi H."/>
            <person name="Ng P."/>
            <person name="Nilsson R."/>
            <person name="Nishiguchi S."/>
            <person name="Nishikawa S."/>
            <person name="Nori F."/>
            <person name="Ohara O."/>
            <person name="Okazaki Y."/>
            <person name="Orlando V."/>
            <person name="Pang K.C."/>
            <person name="Pavan W.J."/>
            <person name="Pavesi G."/>
            <person name="Pesole G."/>
            <person name="Petrovsky N."/>
            <person name="Piazza S."/>
            <person name="Reed J."/>
            <person name="Reid J.F."/>
            <person name="Ring B.Z."/>
            <person name="Ringwald M."/>
            <person name="Rost B."/>
            <person name="Ruan Y."/>
            <person name="Salzberg S.L."/>
            <person name="Sandelin A."/>
            <person name="Schneider C."/>
            <person name="Schoenbach C."/>
            <person name="Sekiguchi K."/>
            <person name="Semple C.A."/>
            <person name="Seno S."/>
            <person name="Sessa L."/>
            <person name="Sheng Y."/>
            <person name="Shibata Y."/>
            <person name="Shimada H."/>
            <person name="Shimada K."/>
            <person name="Silva D."/>
            <person name="Sinclair B."/>
            <person name="Sperling S."/>
            <person name="Stupka E."/>
            <person name="Sugiura K."/>
            <person name="Sultana R."/>
            <person name="Takenaka Y."/>
            <person name="Taki K."/>
            <person name="Tammoja K."/>
            <person name="Tan S.L."/>
            <person name="Tang S."/>
            <person name="Taylor M.S."/>
            <person name="Tegner J."/>
            <person name="Teichmann S.A."/>
            <person name="Ueda H.R."/>
            <person name="van Nimwegen E."/>
            <person name="Verardo R."/>
            <person name="Wei C.L."/>
            <person name="Yagi K."/>
            <person name="Yamanishi H."/>
            <person name="Zabarovsky E."/>
            <person name="Zhu S."/>
            <person name="Zimmer A."/>
            <person name="Hide W."/>
            <person name="Bult C."/>
            <person name="Grimmond S.M."/>
            <person name="Teasdale R.D."/>
            <person name="Liu E.T."/>
            <person name="Brusic V."/>
            <person name="Quackenbush J."/>
            <person name="Wahlestedt C."/>
            <person name="Mattick J.S."/>
            <person name="Hume D.A."/>
            <person name="Kai C."/>
            <person name="Sasaki D."/>
            <person name="Tomaru Y."/>
            <person name="Fukuda S."/>
            <person name="Kanamori-Katayama M."/>
            <person name="Suzuki M."/>
            <person name="Aoki J."/>
            <person name="Arakawa T."/>
            <person name="Iida J."/>
            <person name="Imamura K."/>
            <person name="Itoh M."/>
            <person name="Kato T."/>
            <person name="Kawaji H."/>
            <person name="Kawagashira N."/>
            <person name="Kawashima T."/>
            <person name="Kojima M."/>
            <person name="Kondo S."/>
            <person name="Konno H."/>
            <person name="Nakano K."/>
            <person name="Ninomiya N."/>
            <person name="Nishio T."/>
            <person name="Okada M."/>
            <person name="Plessy C."/>
            <person name="Shibata K."/>
            <person name="Shiraki T."/>
            <person name="Suzuki S."/>
            <person name="Tagami M."/>
            <person name="Waki K."/>
            <person name="Watahiki A."/>
            <person name="Okamura-Oho Y."/>
            <person name="Suzuki H."/>
            <person name="Kawai J."/>
            <person name="Hayashizaki Y."/>
        </authorList>
    </citation>
    <scope>NUCLEOTIDE SEQUENCE [LARGE SCALE MRNA]</scope>
    <source>
        <strain>C57BL/6J</strain>
        <strain>NOD</strain>
        <tissue>Lung</tissue>
        <tissue>Pancreas</tissue>
    </source>
</reference>
<reference key="2">
    <citation type="journal article" date="2004" name="Genome Res.">
        <title>The status, quality, and expansion of the NIH full-length cDNA project: the Mammalian Gene Collection (MGC).</title>
        <authorList>
            <consortium name="The MGC Project Team"/>
        </authorList>
    </citation>
    <scope>NUCLEOTIDE SEQUENCE [LARGE SCALE MRNA]</scope>
    <source>
        <strain>FVB/N</strain>
        <tissue>Liver</tissue>
    </source>
</reference>
<reference key="3">
    <citation type="journal article" date="2015" name="Cell Res.">
        <title>Gasdermin D is an executor of pyroptosis and required for interleukin-1beta secretion.</title>
        <authorList>
            <person name="He W.T."/>
            <person name="Wan H."/>
            <person name="Hu L."/>
            <person name="Chen P."/>
            <person name="Wang X."/>
            <person name="Huang Z."/>
            <person name="Yang Z.H."/>
            <person name="Zhong C.Q."/>
            <person name="Han J."/>
        </authorList>
    </citation>
    <scope>PROTEIN SEQUENCE OF 11-44; 84-125; 139-152 AND 204-218</scope>
    <scope>FUNCTION</scope>
    <scope>ASSOCIATION WITH NLRP3 INFLAMMASOME</scope>
    <scope>SUBCELLULAR LOCATION</scope>
    <scope>MASS SPECTROMETRY</scope>
    <scope>MUTAGENESIS OF ASP-276</scope>
    <scope>CLEAVAGE BY CASP1</scope>
</reference>
<reference key="4">
    <citation type="journal article" date="2015" name="Nature">
        <title>Caspase-11 cleaves gasdermin D for non-canonical inflammasome signalling.</title>
        <authorList>
            <person name="Kayagaki N."/>
            <person name="Stowe I.B."/>
            <person name="Lee B.L."/>
            <person name="O'Rourke K."/>
            <person name="Anderson K."/>
            <person name="Warming S."/>
            <person name="Cuellar T."/>
            <person name="Haley B."/>
            <person name="Roose-Girma M."/>
            <person name="Phung Q.T."/>
            <person name="Liu P.S."/>
            <person name="Lill J.R."/>
            <person name="Li H."/>
            <person name="Wu J."/>
            <person name="Kummerfeld S."/>
            <person name="Zhang J."/>
            <person name="Lee W.P."/>
            <person name="Snipas S.J."/>
            <person name="Salvesen G.S."/>
            <person name="Morris L.X."/>
            <person name="Fitzgerald L."/>
            <person name="Zhang Y."/>
            <person name="Bertram E.M."/>
            <person name="Goodnow C.C."/>
            <person name="Dixit V.M."/>
        </authorList>
    </citation>
    <scope>PROTEIN SEQUENCE OF 277-288</scope>
    <scope>FUNCTION</scope>
    <scope>DISRUPTION PHENOTYPE</scope>
    <scope>MUTAGENESIS OF ILE-105 AND ASP-276</scope>
    <scope>CLEAVAGE BY CASP1 AND CASP4</scope>
</reference>
<reference key="5">
    <citation type="journal article" date="2008" name="Genesis">
        <title>Gasdermin D (Gsdmd) is dispensable for mouse intestinal epithelium development.</title>
        <authorList>
            <person name="Fujii T."/>
            <person name="Tamura M."/>
            <person name="Tanaka S."/>
            <person name="Kato Y."/>
            <person name="Yamamoto H."/>
            <person name="Mizushina Y."/>
            <person name="Shiroishi T."/>
        </authorList>
    </citation>
    <scope>DEVELOPMENTAL STAGE</scope>
    <scope>DISRUPTION PHENOTYPE</scope>
</reference>
<reference key="6">
    <citation type="journal article" date="2010" name="Cell">
        <title>A tissue-specific atlas of mouse protein phosphorylation and expression.</title>
        <authorList>
            <person name="Huttlin E.L."/>
            <person name="Jedrychowski M.P."/>
            <person name="Elias J.E."/>
            <person name="Goswami T."/>
            <person name="Rad R."/>
            <person name="Beausoleil S.A."/>
            <person name="Villen J."/>
            <person name="Haas W."/>
            <person name="Sowa M.E."/>
            <person name="Gygi S.P."/>
        </authorList>
    </citation>
    <scope>IDENTIFICATION BY MASS SPECTROMETRY [LARGE SCALE ANALYSIS]</scope>
    <source>
        <tissue>Liver</tissue>
        <tissue>Lung</tissue>
        <tissue>Spleen</tissue>
    </source>
</reference>
<reference key="7">
    <citation type="journal article" date="2015" name="Nature">
        <title>Cleavage of GSDMD by inflammatory caspases determines pyroptotic cell death.</title>
        <authorList>
            <person name="Shi J."/>
            <person name="Zhao Y."/>
            <person name="Wang K."/>
            <person name="Shi X."/>
            <person name="Wang Y."/>
            <person name="Huang H."/>
            <person name="Zhuang Y."/>
            <person name="Cai T."/>
            <person name="Wang F."/>
            <person name="Shao F."/>
        </authorList>
    </citation>
    <scope>FUNCTION</scope>
    <scope>DISRUPTION PHENOTYPE</scope>
    <scope>ACTIVITY REGULATION</scope>
</reference>
<reference key="8">
    <citation type="journal article" date="2016" name="EMBO J.">
        <title>GSDMD membrane pore formation constitutes the mechanism of pyroptotic cell death.</title>
        <authorList>
            <person name="Sborgi L."/>
            <person name="Ruehl S."/>
            <person name="Mulvihill E."/>
            <person name="Pipercevic J."/>
            <person name="Heilig R."/>
            <person name="Stahlberg H."/>
            <person name="Farady C.J."/>
            <person name="Mueller D.J."/>
            <person name="Broz P."/>
            <person name="Hiller S."/>
        </authorList>
    </citation>
    <scope>FUNCTION (GASDERMIN-D</scope>
    <scope>N-TERMINAL)</scope>
    <scope>SUBCELLULAR LOCATION</scope>
    <scope>ACTIVATION WITH NLRC4 INFLAMMASOME</scope>
</reference>
<reference key="9">
    <citation type="journal article" date="2016" name="J. Immunol.">
        <title>Active caspase-1 induces plasma membrane pores that precede pyroptotic lysis and are blocked by lanthanides.</title>
        <authorList>
            <person name="Russo H.M."/>
            <person name="Rathkey J."/>
            <person name="Boyd-Tressler A."/>
            <person name="Katsnelson M.A."/>
            <person name="Abbott D.W."/>
            <person name="Dubyak G.R."/>
        </authorList>
    </citation>
    <scope>FUNCTION</scope>
</reference>
<reference key="10">
    <citation type="journal article" date="2016" name="Nature">
        <title>Inflammasome-activated gasdermin D causes pyroptosis by forming membrane pores.</title>
        <authorList>
            <person name="Liu X."/>
            <person name="Zhang Z."/>
            <person name="Ruan J."/>
            <person name="Pan Y."/>
            <person name="Magupalli V.G."/>
            <person name="Wu H."/>
            <person name="Lieberman J."/>
        </authorList>
    </citation>
    <scope>FUNCTION (GASDERMIN-D</scope>
    <scope>N-TERMINAL)</scope>
    <scope>CLEAVAGE BY CASP4</scope>
    <scope>LIPID-BINDING</scope>
    <scope>HOMOOLIGOMERIZATION</scope>
    <scope>SUBCELLULAR LOCATION</scope>
    <scope>MUTAGENESIS OF CYS-39; CYS-57; CYS-77; CYS-122; ARG-138; LYS-146; ARG-152; ARG-154; CYS-192; LYS-237; ARG-239; ARG-248; LYS-249 AND CYS-265</scope>
</reference>
<reference key="11">
    <citation type="journal article" date="2016" name="Proc. Natl. Acad. Sci. U.S.A.">
        <title>GsdmD p30 elicited by caspase-11 during pyroptosis forms pores in membranes.</title>
        <authorList>
            <person name="Aglietti R.A."/>
            <person name="Estevez A."/>
            <person name="Gupta A."/>
            <person name="Ramirez M.G."/>
            <person name="Liu P.S."/>
            <person name="Kayagaki N."/>
            <person name="Ciferri C."/>
            <person name="Dixit V.M."/>
            <person name="Dueber E.C."/>
        </authorList>
    </citation>
    <scope>FUNCTION</scope>
    <scope>SUBCELLULAR LOCATION</scope>
</reference>
<reference key="12">
    <citation type="journal article" date="2018" name="Eur. J. Immunol.">
        <title>The Gasdermin-D pore acts as a conduit for IL-1beta secretion in mice.</title>
        <authorList>
            <person name="Heilig R."/>
            <person name="Dick M.S."/>
            <person name="Sborgi L."/>
            <person name="Meunier E."/>
            <person name="Hiller S."/>
            <person name="Broz P."/>
        </authorList>
    </citation>
    <scope>FUNCTION (GASDERMIN-D</scope>
    <scope>N-TERMINAL)</scope>
</reference>
<reference key="13">
    <citation type="journal article" date="2018" name="Immunity">
        <title>The pore-forming protein gasdermin D regulates interleukin-1 secretion from living macrophages.</title>
        <authorList>
            <person name="Evavold C.L."/>
            <person name="Ruan J."/>
            <person name="Tan Y."/>
            <person name="Xia S."/>
            <person name="Wu H."/>
            <person name="Kagan J.C."/>
        </authorList>
    </citation>
    <scope>FUNCTION (GASDERMIN-D</scope>
    <scope>N-TERMINAL)</scope>
</reference>
<reference key="14">
    <citation type="journal article" date="2018" name="J. Exp. Med.">
        <title>Caspase-11 auto-proteolysis is crucial for noncanonical inflammasome activation.</title>
        <authorList>
            <person name="Lee B.L."/>
            <person name="Stowe I.B."/>
            <person name="Gupta A."/>
            <person name="Kornfeld O.S."/>
            <person name="Roose-Girma M."/>
            <person name="Anderson K."/>
            <person name="Warming S."/>
            <person name="Zhang J."/>
            <person name="Lee W.P."/>
            <person name="Kayagaki N."/>
        </authorList>
    </citation>
    <scope>PROTEOLYTIC CLEAVAGE</scope>
    <scope>MUTAGENESIS OF ASP-276</scope>
</reference>
<reference key="15">
    <citation type="journal article" date="2018" name="Proc. Natl. Acad. Sci. U.S.A.">
        <title>Caspase-8 induces cleavage of gasdermin D to elicit pyroptosis during Yersinia infection.</title>
        <authorList>
            <person name="Sarhan J."/>
            <person name="Liu B.C."/>
            <person name="Muendlein H.I."/>
            <person name="Li P."/>
            <person name="Nilson R."/>
            <person name="Tang A.Y."/>
            <person name="Rongvaux A."/>
            <person name="Bunnell S.C."/>
            <person name="Shao F."/>
            <person name="Green D.R."/>
            <person name="Poltorak A."/>
        </authorList>
    </citation>
    <scope>FUNCTION</scope>
    <scope>PROTEOLYTIC CLEAVAGE</scope>
    <scope>ACTIVITY REGULATION</scope>
</reference>
<reference key="16">
    <citation type="journal article" date="2018" name="Science">
        <title>Pathogen blockade of TAK1 triggers caspase-8-dependent cleavage of gasdermin D and cell death.</title>
        <authorList>
            <person name="Orning P."/>
            <person name="Weng D."/>
            <person name="Starheim K."/>
            <person name="Ratner D."/>
            <person name="Best Z."/>
            <person name="Lee B."/>
            <person name="Brooks A."/>
            <person name="Xia S."/>
            <person name="Wu H."/>
            <person name="Kelliher M.A."/>
            <person name="Berger S.B."/>
            <person name="Gough P.J."/>
            <person name="Bertin J."/>
            <person name="Proulx M.M."/>
            <person name="Goguen J.D."/>
            <person name="Kayagaki N."/>
            <person name="Fitzgerald K.A."/>
            <person name="Lien E."/>
        </authorList>
    </citation>
    <scope>FUNCTION</scope>
    <scope>PROTEOLYTIC CLEAVAGE</scope>
    <scope>ACTIVITY REGULATION</scope>
    <scope>MUTAGENESIS OF ASP-276</scope>
</reference>
<reference key="17">
    <citation type="journal article" date="2020" name="J. Biol. Chem.">
        <title>Extended subsite profiling of the pyroptosis effector protein gasdermin D reveals a region recognized by inflammatory caspase-11.</title>
        <authorList>
            <person name="Bibo-Verdugo B."/>
            <person name="Snipas S.J."/>
            <person name="Kolt S."/>
            <person name="Poreba M."/>
            <person name="Salvesen G.S."/>
        </authorList>
    </citation>
    <scope>ACTIVITY REGULATION</scope>
    <scope>PROTEOLYTIC CLEAVAGE</scope>
</reference>
<reference key="18">
    <citation type="journal article" date="2020" name="Science">
        <title>Succination inactivates gasdermin D and blocks pyroptosis.</title>
        <authorList>
            <person name="Humphries F."/>
            <person name="Shmuel-Galia L."/>
            <person name="Ketelut-Carneiro N."/>
            <person name="Li S."/>
            <person name="Wang B."/>
            <person name="Nemmara V.V."/>
            <person name="Wilson R."/>
            <person name="Jiang Z."/>
            <person name="Khalighinejad F."/>
            <person name="Muneeruddin K."/>
            <person name="Shaffer S.A."/>
            <person name="Dutta R."/>
            <person name="Ionete C."/>
            <person name="Pesiridis S."/>
            <person name="Yang S."/>
            <person name="Thompson P.R."/>
            <person name="Fitzgerald K.A."/>
        </authorList>
    </citation>
    <scope>FUNCTION</scope>
    <scope>SUCCINATION AT CYS-39; CYS-57; CYS-77; CYS-122; CYS-192; CYS-265; CYS-299; CYS-434 AND CYS-487</scope>
    <scope>MUTAGENESIS OF CYS-192</scope>
</reference>
<reference key="19">
    <citation type="journal article" date="2021" name="Cell">
        <title>Control of gasdermin D oligomerization and pyroptosis by the Ragulator-Rag-mTORC1 pathway.</title>
        <authorList>
            <person name="Evavold C.L."/>
            <person name="Hafner-Bratkovic I."/>
            <person name="Devant P."/>
            <person name="D'Andrea J.M."/>
            <person name="Ngwa E.M."/>
            <person name="Borsic E."/>
            <person name="Doench J.G."/>
            <person name="LaFleur M.W."/>
            <person name="Sharpe A.H."/>
            <person name="Thiagarajah J.R."/>
            <person name="Kagan J.C."/>
        </authorList>
    </citation>
    <scope>FUNCTION</scope>
    <scope>SUBUNIT</scope>
</reference>
<reference key="20">
    <citation type="journal article" date="2021" name="Nature">
        <title>Gasdermin D pore structure reveals preferential release of mature interleukin-1.</title>
        <authorList>
            <person name="Xia S."/>
            <person name="Zhang Z."/>
            <person name="Magupalli V.G."/>
            <person name="Pablo J.L."/>
            <person name="Dong Y."/>
            <person name="Vora S.M."/>
            <person name="Wang L."/>
            <person name="Fu T.M."/>
            <person name="Jacobson M.P."/>
            <person name="Greka A."/>
            <person name="Lieberman J."/>
            <person name="Ruan J."/>
            <person name="Wu H."/>
        </authorList>
    </citation>
    <scope>FUNCTION (GASDERMIN-D</scope>
    <scope>N-TERMINAL)</scope>
    <scope>MUTAGENESIS OF 50-PHE-TRP-51</scope>
</reference>
<reference key="21">
    <citation type="journal article" date="2022" name="Nature">
        <title>Caspase-7 activates ASM to repair gasdermin and perforin pores.</title>
        <authorList>
            <person name="Nozaki K."/>
            <person name="Maltez V.I."/>
            <person name="Rayamajhi M."/>
            <person name="Tubbs A.L."/>
            <person name="Mitchell J.E."/>
            <person name="Lacey C.A."/>
            <person name="Harvest C.K."/>
            <person name="Li L."/>
            <person name="Nash W.T."/>
            <person name="Larson H.N."/>
            <person name="McGlaughon B.D."/>
            <person name="Moorman N.J."/>
            <person name="Brown M.G."/>
            <person name="Whitmire J.K."/>
            <person name="Miao E.A."/>
        </authorList>
    </citation>
    <scope>FUNCTION</scope>
</reference>
<reference key="22">
    <citation type="journal article" date="2022" name="Nat. Immunol.">
        <title>Allergen protease-activated stress granule assembly and gasdermin D fragmentation control interleukin-33 secretion.</title>
        <authorList>
            <person name="Chen W."/>
            <person name="Chen S."/>
            <person name="Yan C."/>
            <person name="Zhang Y."/>
            <person name="Zhang R."/>
            <person name="Chen M."/>
            <person name="Zhong S."/>
            <person name="Fan W."/>
            <person name="Zhu S."/>
            <person name="Zhang D."/>
            <person name="Lu X."/>
            <person name="Zhang J."/>
            <person name="Huang Y."/>
            <person name="Zhu L."/>
            <person name="Li X."/>
            <person name="Lv D."/>
            <person name="Fu Y."/>
            <person name="Iv H."/>
            <person name="Ling Z."/>
            <person name="Ma L."/>
            <person name="Jiang H."/>
            <person name="Long G."/>
            <person name="Zhu J."/>
            <person name="Wu D."/>
            <person name="Wu B."/>
            <person name="Sun B."/>
        </authorList>
    </citation>
    <scope>FUNCTION (GASDERMIN-D</scope>
    <scope>P40)</scope>
    <scope>PROTEOLYTIC CLEAVAGE</scope>
    <scope>MUTAGENESIS OF 309-GLU--GLN-313</scope>
</reference>
<reference key="23">
    <citation type="journal article" date="2022" name="Science">
        <title>A bacterial phospholipid phosphatase inhibits host pyroptosis by hijacking ubiquitin.</title>
        <authorList>
            <person name="Chai Q."/>
            <person name="Yu S."/>
            <person name="Zhong Y."/>
            <person name="Lu Z."/>
            <person name="Qiu C."/>
            <person name="Yu Y."/>
            <person name="Zhang X."/>
            <person name="Zhang Y."/>
            <person name="Lei Z."/>
            <person name="Qiang L."/>
            <person name="Li B.X."/>
            <person name="Pang Y."/>
            <person name="Qiu X.B."/>
            <person name="Wang J."/>
            <person name="Liu C.H."/>
        </authorList>
    </citation>
    <scope>SUBCELLULAR LOCATION</scope>
    <scope>SUBCELLULAR LOCATION (MICROBIAL INFECTION)</scope>
</reference>
<reference key="24">
    <citation type="journal article" date="2022" name="Sci. Immunol.">
        <title>Gasdermin D-mediated release of IL-33 from senescent hepatic stellate cells promotes obesity-associated hepatocellular carcinoma.</title>
        <authorList>
            <person name="Yamagishi R."/>
            <person name="Kamachi F."/>
            <person name="Nakamura M."/>
            <person name="Yamazaki S."/>
            <person name="Kamiya T."/>
            <person name="Takasugi M."/>
            <person name="Cheng Y."/>
            <person name="Nonaka Y."/>
            <person name="Yukawa-Muto Y."/>
            <person name="Thuy L.T.T."/>
            <person name="Harada Y."/>
            <person name="Arai T."/>
            <person name="Loo T.M."/>
            <person name="Yoshimoto S."/>
            <person name="Ando T."/>
            <person name="Nakajima M."/>
            <person name="Taguchi H."/>
            <person name="Ishikawa T."/>
            <person name="Akiba H."/>
            <person name="Miyake S."/>
            <person name="Kubo M."/>
            <person name="Iwakura Y."/>
            <person name="Fukuda S."/>
            <person name="Chen W.Y."/>
            <person name="Kawada N."/>
            <person name="Rudensky A."/>
            <person name="Nakae S."/>
            <person name="Hara E."/>
            <person name="Ohtani N."/>
        </authorList>
    </citation>
    <scope>FUNCTION (GASDERMIN-D</scope>
    <scope>P40)</scope>
    <scope>PROTEOLYTIC CLEAVAGE</scope>
</reference>
<reference key="25">
    <citation type="journal article" date="2023" name="Cell">
        <title>Gasdermin D licenses MHCII induction to maintain food tolerance in small intestine.</title>
        <authorList>
            <person name="He K."/>
            <person name="Wan T."/>
            <person name="Wang D."/>
            <person name="Hu J."/>
            <person name="Zhou T."/>
            <person name="Tao W."/>
            <person name="Wei Z."/>
            <person name="Lu Q."/>
            <person name="Zhou R."/>
            <person name="Tian Z."/>
            <person name="Flavell R.A."/>
            <person name="Zhu S."/>
        </authorList>
    </citation>
    <scope>FUNCTION (GASDERMIN-D</scope>
    <scope>P13)</scope>
    <scope>SUBCELLULAR LOCATION</scope>
    <scope>PROTEOLYTIC CLEAVAGE</scope>
    <scope>MUTAGENESIS OF 85-ASP--ASP-88</scope>
</reference>
<reference key="26">
    <citation type="journal article" date="2023" name="Immunity">
        <title>The orphan receptor Nur77 binds cytoplasmic LPS to activate the non-canonical NLRP3 inflammasome.</title>
        <authorList>
            <person name="Zhu F."/>
            <person name="Ma J."/>
            <person name="Li W."/>
            <person name="Liu Q."/>
            <person name="Qin X."/>
            <person name="Qian Y."/>
            <person name="Wang C."/>
            <person name="Zhang Y."/>
            <person name="Li Y."/>
            <person name="Jiang D."/>
            <person name="Wang S."/>
            <person name="Xia P."/>
        </authorList>
    </citation>
    <scope>FUNCTION (GASDERMIN-D</scope>
    <scope>N-TERMINAL)</scope>
    <scope>SUBCELLULAR LOCATION</scope>
</reference>
<reference key="27">
    <citation type="journal article" date="2023" name="Nat. Commun.">
        <title>Insights into the GSDMB-mediated cellular lysis and its targeting by IpaH7.8.</title>
        <authorList>
            <person name="Yin H."/>
            <person name="Zheng J."/>
            <person name="He Q."/>
            <person name="Zhang X."/>
            <person name="Li X."/>
            <person name="Ma Y."/>
            <person name="Liang X."/>
            <person name="Gao J."/>
            <person name="Kocsis B.L."/>
            <person name="Li Z."/>
            <person name="Liu X."/>
            <person name="Alto N.M."/>
            <person name="Li L."/>
            <person name="Zhang H."/>
        </authorList>
    </citation>
    <scope>MUTAGENESIS OF 17-SER--ARG-20</scope>
</reference>
<reference key="28">
    <citation type="journal article" date="2024" name="Nature">
        <title>ROS-dependent S-palmitoylation activates cleaved and intact gasdermin D.</title>
        <authorList>
            <person name="Du G."/>
            <person name="Healy L.B."/>
            <person name="David L."/>
            <person name="Walker C."/>
            <person name="El-Baba T.J."/>
            <person name="Lutomski C.A."/>
            <person name="Goh B."/>
            <person name="Gu B."/>
            <person name="Pi X."/>
            <person name="Devant P."/>
            <person name="Fontana P."/>
            <person name="Dong Y."/>
            <person name="Ma X."/>
            <person name="Miao R."/>
            <person name="Balasubramanian A."/>
            <person name="Puthenveetil R."/>
            <person name="Banerjee A."/>
            <person name="Luo H.R."/>
            <person name="Kagan J.C."/>
            <person name="Oh S.F."/>
            <person name="Robinson C.V."/>
            <person name="Lieberman J."/>
            <person name="Wu H."/>
        </authorList>
    </citation>
    <scope>PALMITOYLATION AT CYS-192</scope>
</reference>
<reference key="29">
    <citation type="journal article" date="2024" name="Nature">
        <title>Brain endothelial GSDMD activation mediates inflammatory BBB breakdown.</title>
        <authorList>
            <person name="Wei C."/>
            <person name="Jiang W."/>
            <person name="Wang R."/>
            <person name="Zhong H."/>
            <person name="He H."/>
            <person name="Gao X."/>
            <person name="Zhong S."/>
            <person name="Yu F."/>
            <person name="Guo Q."/>
            <person name="Zhang L."/>
            <person name="Schiffelers L.D.J."/>
            <person name="Zhou B."/>
            <person name="Trepel M."/>
            <person name="Schmidt F.I."/>
            <person name="Luo M."/>
            <person name="Shao F."/>
        </authorList>
    </citation>
    <scope>FUNCTION</scope>
    <scope>ACTIVITY REGULATION</scope>
    <scope>TISSUE SPECIFICITY</scope>
    <scope>DISRUPTION PHENOTYPE</scope>
</reference>
<reference key="30">
    <citation type="journal article" date="2024" name="Nat. Cell Biol.">
        <title>A palmitoylation-depalmitoylation relay spatiotemporally controls GSDMD activation in pyroptosis.</title>
        <authorList>
            <person name="Zhang N."/>
            <person name="Zhang J."/>
            <person name="Yang Y."/>
            <person name="Shan H."/>
            <person name="Hou S."/>
            <person name="Fang H."/>
            <person name="Ma M."/>
            <person name="Chen Z."/>
            <person name="Tan L."/>
            <person name="Xu D."/>
        </authorList>
    </citation>
    <scope>FUNCTION</scope>
    <scope>SUBCELLULAR LOCATION</scope>
    <scope>PALMITOYLATION AT CYS-192</scope>
    <scope>MUTAGENESIS OF CYS-192 AND ASP-276</scope>
</reference>
<reference key="31">
    <citation type="journal article" date="2023" name="Proc. Natl. Acad. Sci. U.S.A.">
        <title>Gasdermin D is the only Gasdermin that provides protection against acute Salmonella gut infection in mice.</title>
        <authorList>
            <person name="Fattinger S.A."/>
            <person name="Maurer L."/>
            <person name="Geiser P."/>
            <person name="Bernard E.M."/>
            <person name="Enz U."/>
            <person name="Ganguillet S."/>
            <person name="Guel E."/>
            <person name="Kroon S."/>
            <person name="Demarco B."/>
            <person name="Mack V."/>
            <person name="Furter M."/>
            <person name="Barthel M."/>
            <person name="Pelczar P."/>
            <person name="Shao F."/>
            <person name="Broz P."/>
            <person name="Sellin M.E."/>
            <person name="Hardt W.D."/>
        </authorList>
    </citation>
    <scope>FUNCTION</scope>
    <scope>DISRUPTION PHENOTYPE</scope>
</reference>
<reference key="32">
    <citation type="journal article" date="2024" name="Sci. Adv.">
        <title>NU6300 covalently reacts with cysteine-191 of gasdermin D to block its cleavage and palmitoylation.</title>
        <authorList>
            <person name="Jiang X."/>
            <person name="Zhang X."/>
            <person name="Cai X."/>
            <person name="Li N."/>
            <person name="Zheng H."/>
            <person name="Tang M."/>
            <person name="Zhu J."/>
            <person name="Su K."/>
            <person name="Zhang R."/>
            <person name="Ye N."/>
            <person name="Peng J."/>
            <person name="Zhao M."/>
            <person name="Wu W."/>
            <person name="Yang J."/>
            <person name="Ye H."/>
        </authorList>
    </citation>
    <scope>PALMITOYLATION</scope>
    <scope>ACTIVITY REGULATION</scope>
</reference>
<reference key="33">
    <citation type="journal article" date="2024" name="Sci. Immunol.">
        <title>The palmitoylation of gasdermin D directs its membrane translocation and pore formation during pyroptosis.</title>
        <authorList>
            <person name="Balasubramanian A."/>
            <person name="Hsu A.Y."/>
            <person name="Ghimire L."/>
            <person name="Tahir M."/>
            <person name="Devant P."/>
            <person name="Fontana P."/>
            <person name="Du G."/>
            <person name="Liu X."/>
            <person name="Fabin D."/>
            <person name="Kambara H."/>
            <person name="Xie X."/>
            <person name="Liu F."/>
            <person name="Hasegawa T."/>
            <person name="Xu R."/>
            <person name="Yu H."/>
            <person name="Chen M."/>
            <person name="Kolakowski S."/>
            <person name="Trauger S."/>
            <person name="Larsen M.R."/>
            <person name="Wei W."/>
            <person name="Wu H."/>
            <person name="Kagan J.C."/>
            <person name="Lieberman J."/>
            <person name="Luo H.R."/>
        </authorList>
    </citation>
    <scope>FUNCTION</scope>
    <scope>SUBCELLULAR LOCATION</scope>
    <scope>PALMITOYLATION AT CYS-192</scope>
    <scope>MUTAGENESIS OF CYS-192</scope>
</reference>
<reference evidence="49" key="34">
    <citation type="journal article" date="2018" name="Structure">
        <title>Structures of the Gasdermin D C-terminal domains reveal mechanisms of autoinhibition.</title>
        <authorList>
            <person name="Liu Z."/>
            <person name="Wang C."/>
            <person name="Rathkey J.K."/>
            <person name="Yang J."/>
            <person name="Dubyak G.R."/>
            <person name="Abbott D.W."/>
            <person name="Xiao T.S."/>
        </authorList>
    </citation>
    <scope>X-RAY CRYSTALLOGRAPHY (1.76 ANGSTROMS) OF 277-487</scope>
    <scope>ACTIVITY REGULATION</scope>
    <scope>DOMAIN</scope>
    <scope>MUTAGENESIS OF ILE-105 AND TYR-376</scope>
</reference>
<reference evidence="51" key="35">
    <citation type="journal article" date="2019" name="Immunity">
        <title>Crystal structures of the full-length murine and human Gasdermin D reveal mechanisms of autoinhibition, lipid binding, and oligomerization.</title>
        <authorList>
            <person name="Liu Z."/>
            <person name="Wang C."/>
            <person name="Yang J."/>
            <person name="Zhou B."/>
            <person name="Yang R."/>
            <person name="Ramachandran R."/>
            <person name="Abbott D.W."/>
            <person name="Xiao T.S."/>
        </authorList>
    </citation>
    <scope>X-RAY CRYSTALLOGRAPHY (3.30 ANGSTROMS)</scope>
    <scope>ACTIVITY REGULATION</scope>
    <scope>DOMAIN</scope>
    <scope>MUTAGENESIS OF 7-LYS--LYS-14; LEU-29; 43-ARG--ARG-54; 50-PHE-TRP-51; LEU-60; PHE-81; ILE-91; VAL-95; LEU-193; 230-ILE--VAL-233; LEU-292; GLU-295; ALA-380; SER-470 AND ALA-474</scope>
</reference>
<reference evidence="50" key="36">
    <citation type="journal article" date="2020" name="Cell">
        <title>Structural mechanism for GSDMD targeting by autoprocessed caspases in pyroptosis.</title>
        <authorList>
            <person name="Wang K."/>
            <person name="Sun Q."/>
            <person name="Zhong X."/>
            <person name="Zeng M."/>
            <person name="Zeng H."/>
            <person name="Shi X."/>
            <person name="Li Z."/>
            <person name="Wang Y."/>
            <person name="Zhao Q."/>
            <person name="Shao F."/>
            <person name="Ding J."/>
        </authorList>
    </citation>
    <scope>X-RAY CRYSTALLOGRAPHY (3.35 ANGSTROMS) OF 287-484 AND 289-484 IN COMPLEX WITH GSDMD</scope>
</reference>
<reference evidence="52" key="37">
    <citation type="journal article" date="2020" name="Immunity">
        <title>Caspase-1 engages full-length Gasdermin D through two distinct interfaces that mediate caspase recruitment and substrate cleavage.</title>
        <authorList>
            <person name="Liu Z."/>
            <person name="Wang C."/>
            <person name="Yang J."/>
            <person name="Chen Y."/>
            <person name="Zhou B."/>
            <person name="Abbott D.W."/>
            <person name="Xiao T.S."/>
        </authorList>
    </citation>
    <scope>X-RAY CRYSTALLOGRAPHY (3.40 ANGSTROMS) IN COMPLEX WITH CASP1</scope>
    <scope>PROTEOLYTIC CLEAVAGE</scope>
    <scope>ACTIVITY REGULATION</scope>
    <scope>MUTAGENESIS OF LEU-273; ASP-276; 306-LEU--LEU-310; 361-LEU--LEU-370 AND GLU-369</scope>
</reference>
<accession>Q9D8T2</accession>
<accession>Q3TBD9</accession>
<protein>
    <recommendedName>
        <fullName evidence="35">Gasdermin-D</fullName>
    </recommendedName>
    <alternativeName>
        <fullName>Gasdermin domain-containing protein 1</fullName>
    </alternativeName>
    <component>
        <recommendedName>
            <fullName evidence="41">Gasdermin-D, N-terminal</fullName>
            <shortName evidence="37">GSDMD-NT</shortName>
            <shortName evidence="38">mGSDMD-NTD</shortName>
            <shortName evidence="36">p30</shortName>
        </recommendedName>
    </component>
    <component>
        <recommendedName>
            <fullName evidence="41">Gasdermin-D, C-terminal</fullName>
            <shortName evidence="37">GSDMD-CT</shortName>
            <shortName evidence="38">mGSDMD-CTD</shortName>
            <shortName evidence="36">p20</shortName>
        </recommendedName>
    </component>
    <component>
        <recommendedName>
            <fullName evidence="41">Gasdermin-D, p13</fullName>
        </recommendedName>
        <alternativeName>
            <fullName evidence="40">Gasdermin-D, 13 kDa</fullName>
            <shortName evidence="40">13 kDa GSDMD</shortName>
        </alternativeName>
    </component>
    <component>
        <recommendedName>
            <fullName evidence="39">Gasdermin-D, p40</fullName>
        </recommendedName>
    </component>
</protein>
<name>GSDMD_MOUSE</name>
<proteinExistence type="evidence at protein level"/>
<keyword id="KW-0002">3D-structure</keyword>
<keyword id="KW-1003">Cell membrane</keyword>
<keyword id="KW-0963">Cytoplasm</keyword>
<keyword id="KW-0903">Direct protein sequencing</keyword>
<keyword id="KW-0325">Glycoprotein</keyword>
<keyword id="KW-0391">Immunity</keyword>
<keyword id="KW-1271">Inflammasome</keyword>
<keyword id="KW-0395">Inflammatory response</keyword>
<keyword id="KW-0399">Innate immunity</keyword>
<keyword id="KW-0446">Lipid-binding</keyword>
<keyword id="KW-0449">Lipoprotein</keyword>
<keyword id="KW-0472">Membrane</keyword>
<keyword id="KW-0496">Mitochondrion</keyword>
<keyword id="KW-1210">Necrosis</keyword>
<keyword id="KW-0539">Nucleus</keyword>
<keyword id="KW-0564">Palmitate</keyword>
<keyword id="KW-0597">Phosphoprotein</keyword>
<keyword id="KW-1185">Reference proteome</keyword>
<keyword id="KW-0964">Secreted</keyword>
<keyword id="KW-0804">Transcription</keyword>
<keyword id="KW-0805">Transcription regulation</keyword>
<keyword id="KW-0812">Transmembrane</keyword>
<keyword id="KW-1134">Transmembrane beta strand</keyword>